<evidence type="ECO:0000250" key="1">
    <source>
        <dbReference type="UniProtKB" id="P03905"/>
    </source>
</evidence>
<evidence type="ECO:0000250" key="2">
    <source>
        <dbReference type="UniProtKB" id="P03910"/>
    </source>
</evidence>
<evidence type="ECO:0000255" key="3"/>
<evidence type="ECO:0000269" key="4">
    <source>
    </source>
</evidence>
<evidence type="ECO:0000305" key="5"/>
<proteinExistence type="inferred from homology"/>
<reference key="1">
    <citation type="journal article" date="2005" name="Mol. Phylogenet. Evol.">
        <title>A phylogeny of the Caniformia (order Carnivora) based on 12 complete protein-coding mitochondrial genes.</title>
        <authorList>
            <person name="Delisle I."/>
            <person name="Strobeck C."/>
        </authorList>
    </citation>
    <scope>NUCLEOTIDE SEQUENCE [GENOMIC DNA]</scope>
</reference>
<reference key="2">
    <citation type="journal article" date="2006" name="Genome Res.">
        <title>Relaxation of selective constraint on dog mitochondrial DNA following domestication.</title>
        <authorList>
            <person name="Bjornerfeldt S."/>
            <person name="Webster M.T."/>
            <person name="Vila C."/>
        </authorList>
    </citation>
    <scope>NUCLEOTIDE SEQUENCE [GENOMIC DNA]</scope>
    <scope>VARIANTS ALA-29; LEU-40 AND SER-425</scope>
</reference>
<protein>
    <recommendedName>
        <fullName>NADH-ubiquinone oxidoreductase chain 4</fullName>
        <ecNumber evidence="1">7.1.1.2</ecNumber>
    </recommendedName>
    <alternativeName>
        <fullName>NADH dehydrogenase subunit 4</fullName>
    </alternativeName>
</protein>
<geneLocation type="mitochondrion"/>
<comment type="function">
    <text evidence="1">Core subunit of the mitochondrial membrane respiratory chain NADH dehydrogenase (Complex I) which catalyzes electron transfer from NADH through the respiratory chain, using ubiquinone as an electron acceptor. Essential for the catalytic activity and assembly of complex I.</text>
</comment>
<comment type="catalytic activity">
    <reaction evidence="1">
        <text>a ubiquinone + NADH + 5 H(+)(in) = a ubiquinol + NAD(+) + 4 H(+)(out)</text>
        <dbReference type="Rhea" id="RHEA:29091"/>
        <dbReference type="Rhea" id="RHEA-COMP:9565"/>
        <dbReference type="Rhea" id="RHEA-COMP:9566"/>
        <dbReference type="ChEBI" id="CHEBI:15378"/>
        <dbReference type="ChEBI" id="CHEBI:16389"/>
        <dbReference type="ChEBI" id="CHEBI:17976"/>
        <dbReference type="ChEBI" id="CHEBI:57540"/>
        <dbReference type="ChEBI" id="CHEBI:57945"/>
        <dbReference type="EC" id="7.1.1.2"/>
    </reaction>
</comment>
<comment type="subunit">
    <text evidence="2">Core subunit of respiratory chain NADH dehydrogenase (Complex I) which is composed of 45 different subunits.</text>
</comment>
<comment type="subcellular location">
    <subcellularLocation>
        <location evidence="2">Mitochondrion inner membrane</location>
        <topology evidence="3">Multi-pass membrane protein</topology>
    </subcellularLocation>
</comment>
<comment type="similarity">
    <text evidence="5">Belongs to the complex I subunit 4 family.</text>
</comment>
<accession>Q3L6Y5</accession>
<accession>Q1HKA7</accession>
<accession>Q1HKE6</accession>
<name>NU4M_CANLU</name>
<feature type="chain" id="PRO_0000269896" description="NADH-ubiquinone oxidoreductase chain 4">
    <location>
        <begin position="1"/>
        <end position="459"/>
    </location>
</feature>
<feature type="transmembrane region" description="Helical" evidence="3">
    <location>
        <begin position="22"/>
        <end position="42"/>
    </location>
</feature>
<feature type="transmembrane region" description="Helical" evidence="3">
    <location>
        <begin position="60"/>
        <end position="80"/>
    </location>
</feature>
<feature type="transmembrane region" description="Helical" evidence="3">
    <location>
        <begin position="93"/>
        <end position="113"/>
    </location>
</feature>
<feature type="transmembrane region" description="Helical" evidence="3">
    <location>
        <begin position="114"/>
        <end position="134"/>
    </location>
</feature>
<feature type="transmembrane region" description="Helical" evidence="3">
    <location>
        <begin position="147"/>
        <end position="167"/>
    </location>
</feature>
<feature type="transmembrane region" description="Helical" evidence="3">
    <location>
        <begin position="193"/>
        <end position="213"/>
    </location>
</feature>
<feature type="transmembrane region" description="Helical" evidence="3">
    <location>
        <begin position="224"/>
        <end position="244"/>
    </location>
</feature>
<feature type="transmembrane region" description="Helical" evidence="3">
    <location>
        <begin position="256"/>
        <end position="276"/>
    </location>
</feature>
<feature type="transmembrane region" description="Helical" evidence="3">
    <location>
        <begin position="284"/>
        <end position="303"/>
    </location>
</feature>
<feature type="transmembrane region" description="Helical" evidence="3">
    <location>
        <begin position="308"/>
        <end position="330"/>
    </location>
</feature>
<feature type="transmembrane region" description="Helical" evidence="3">
    <location>
        <begin position="351"/>
        <end position="371"/>
    </location>
</feature>
<feature type="transmembrane region" description="Helical" evidence="3">
    <location>
        <begin position="391"/>
        <end position="411"/>
    </location>
</feature>
<feature type="transmembrane region" description="Helical" evidence="3">
    <location>
        <begin position="435"/>
        <end position="455"/>
    </location>
</feature>
<feature type="sequence variant" evidence="4">
    <original>T</original>
    <variation>A</variation>
    <location>
        <position position="29"/>
    </location>
</feature>
<feature type="sequence variant" evidence="4">
    <original>F</original>
    <variation>L</variation>
    <location>
        <position position="40"/>
    </location>
</feature>
<feature type="sequence variant" evidence="4">
    <original>N</original>
    <variation>S</variation>
    <location>
        <position position="425"/>
    </location>
</feature>
<keyword id="KW-0249">Electron transport</keyword>
<keyword id="KW-0472">Membrane</keyword>
<keyword id="KW-0496">Mitochondrion</keyword>
<keyword id="KW-0999">Mitochondrion inner membrane</keyword>
<keyword id="KW-0520">NAD</keyword>
<keyword id="KW-0679">Respiratory chain</keyword>
<keyword id="KW-1278">Translocase</keyword>
<keyword id="KW-0812">Transmembrane</keyword>
<keyword id="KW-1133">Transmembrane helix</keyword>
<keyword id="KW-0813">Transport</keyword>
<keyword id="KW-0830">Ubiquinone</keyword>
<gene>
    <name type="primary">MT-ND4</name>
    <name type="synonym">MTND4</name>
    <name type="synonym">NADH4</name>
    <name type="synonym">ND4</name>
</gene>
<organism>
    <name type="scientific">Canis lupus</name>
    <name type="common">Gray wolf</name>
    <dbReference type="NCBI Taxonomy" id="9612"/>
    <lineage>
        <taxon>Eukaryota</taxon>
        <taxon>Metazoa</taxon>
        <taxon>Chordata</taxon>
        <taxon>Craniata</taxon>
        <taxon>Vertebrata</taxon>
        <taxon>Euteleostomi</taxon>
        <taxon>Mammalia</taxon>
        <taxon>Eutheria</taxon>
        <taxon>Laurasiatheria</taxon>
        <taxon>Carnivora</taxon>
        <taxon>Caniformia</taxon>
        <taxon>Canidae</taxon>
        <taxon>Canis</taxon>
    </lineage>
</organism>
<sequence length="459" mass="52083">MLKIIIPTIMLIPLTWMSKPNMIWINTTTYGLLISLISLFYLNQPNDNTLNSSLMFFSDSLSAPLLALTTWLLPLMLMASQHHLSKEPLTRKKLYISMLILLQLFLIMTFTASELIFFYILFEATLIPTLIIITRWGNQTERLNAGLYFLFYTLMGSLPLLVALLYIHNFMGSLNFLMIQYWIQPLPNSWSNIFLWLACMMAFMVKMPLYGLHLWLPKAHVEAPIAGSMVLAAVLLKLGGYGMMRITTLLNPLTNFMAYPFMMLSLWGMIMTSSICLRQTDLKSLIAYSSVSHMALVIVAVLIQTPWSYMGATALMIAHGLTSSMLFCLANSNYERIHSRTMILARGLQTLLPLMAAWWLLASLTNLALPPTINLIGELFVVMSSFSWSNITIILMGINITITALYSLYMLITTQRGKYSHHIKNIKPSFTRENALMTLHLLPLLLLSLNPKIILGPIY</sequence>
<dbReference type="EC" id="7.1.1.2" evidence="1"/>
<dbReference type="EMBL" id="AY598503">
    <property type="protein sequence ID" value="AAU00449.1"/>
    <property type="molecule type" value="Genomic_DNA"/>
</dbReference>
<dbReference type="EMBL" id="DQ480503">
    <property type="protein sequence ID" value="ABE48164.1"/>
    <property type="molecule type" value="Genomic_DNA"/>
</dbReference>
<dbReference type="EMBL" id="DQ480504">
    <property type="protein sequence ID" value="ABE48177.1"/>
    <property type="molecule type" value="Genomic_DNA"/>
</dbReference>
<dbReference type="EMBL" id="DQ480505">
    <property type="protein sequence ID" value="ABE48190.1"/>
    <property type="molecule type" value="Genomic_DNA"/>
</dbReference>
<dbReference type="EMBL" id="DQ480506">
    <property type="protein sequence ID" value="ABE48203.1"/>
    <property type="molecule type" value="Genomic_DNA"/>
</dbReference>
<dbReference type="EMBL" id="DQ480508">
    <property type="protein sequence ID" value="ABE48229.1"/>
    <property type="molecule type" value="Genomic_DNA"/>
</dbReference>
<dbReference type="EMBL" id="DQ480507">
    <property type="protein sequence ID" value="ABE48216.1"/>
    <property type="molecule type" value="Genomic_DNA"/>
</dbReference>
<dbReference type="RefSeq" id="YP_626737.1">
    <property type="nucleotide sequence ID" value="NC_008092.1"/>
</dbReference>
<dbReference type="SMR" id="Q3L6Y5"/>
<dbReference type="GeneID" id="4097760"/>
<dbReference type="CTD" id="4538"/>
<dbReference type="GO" id="GO:0005743">
    <property type="term" value="C:mitochondrial inner membrane"/>
    <property type="evidence" value="ECO:0000250"/>
    <property type="project" value="UniProtKB"/>
</dbReference>
<dbReference type="GO" id="GO:0008137">
    <property type="term" value="F:NADH dehydrogenase (ubiquinone) activity"/>
    <property type="evidence" value="ECO:0000250"/>
    <property type="project" value="UniProtKB"/>
</dbReference>
<dbReference type="GO" id="GO:0048039">
    <property type="term" value="F:ubiquinone binding"/>
    <property type="evidence" value="ECO:0007669"/>
    <property type="project" value="TreeGrafter"/>
</dbReference>
<dbReference type="GO" id="GO:0015990">
    <property type="term" value="P:electron transport coupled proton transport"/>
    <property type="evidence" value="ECO:0007669"/>
    <property type="project" value="TreeGrafter"/>
</dbReference>
<dbReference type="GO" id="GO:0006120">
    <property type="term" value="P:mitochondrial electron transport, NADH to ubiquinone"/>
    <property type="evidence" value="ECO:0000250"/>
    <property type="project" value="UniProtKB"/>
</dbReference>
<dbReference type="GO" id="GO:0032981">
    <property type="term" value="P:mitochondrial respiratory chain complex I assembly"/>
    <property type="evidence" value="ECO:0000250"/>
    <property type="project" value="UniProtKB"/>
</dbReference>
<dbReference type="InterPro" id="IPR000260">
    <property type="entry name" value="NADH4_N"/>
</dbReference>
<dbReference type="InterPro" id="IPR010227">
    <property type="entry name" value="NADH_Q_OxRdtase_chainM/4"/>
</dbReference>
<dbReference type="InterPro" id="IPR003918">
    <property type="entry name" value="NADH_UbQ_OxRdtase"/>
</dbReference>
<dbReference type="InterPro" id="IPR001750">
    <property type="entry name" value="ND/Mrp_TM"/>
</dbReference>
<dbReference type="NCBIfam" id="TIGR01972">
    <property type="entry name" value="NDH_I_M"/>
    <property type="match status" value="1"/>
</dbReference>
<dbReference type="PANTHER" id="PTHR43507">
    <property type="entry name" value="NADH-UBIQUINONE OXIDOREDUCTASE CHAIN 4"/>
    <property type="match status" value="1"/>
</dbReference>
<dbReference type="PANTHER" id="PTHR43507:SF20">
    <property type="entry name" value="NADH-UBIQUINONE OXIDOREDUCTASE CHAIN 4"/>
    <property type="match status" value="1"/>
</dbReference>
<dbReference type="Pfam" id="PF01059">
    <property type="entry name" value="Oxidored_q5_N"/>
    <property type="match status" value="1"/>
</dbReference>
<dbReference type="Pfam" id="PF00361">
    <property type="entry name" value="Proton_antipo_M"/>
    <property type="match status" value="1"/>
</dbReference>
<dbReference type="PRINTS" id="PR01437">
    <property type="entry name" value="NUOXDRDTASE4"/>
</dbReference>